<gene>
    <name evidence="1" type="primary">pcn</name>
    <name type="ordered locus">PH0665</name>
</gene>
<evidence type="ECO:0000255" key="1">
    <source>
        <dbReference type="HAMAP-Rule" id="MF_00317"/>
    </source>
</evidence>
<keyword id="KW-0235">DNA replication</keyword>
<keyword id="KW-0238">DNA-binding</keyword>
<comment type="function">
    <text evidence="1">Sliding clamp subunit that acts as a moving platform for DNA processing. Responsible for tethering the catalytic subunit of DNA polymerase and other proteins to DNA during high-speed replication.</text>
</comment>
<comment type="subunit">
    <text evidence="1">Homotrimer. The subunits circularize to form a toroid; DNA passes through its center. Replication factor C (RFC) is required to load the toroid on the DNA.</text>
</comment>
<comment type="similarity">
    <text evidence="1">Belongs to the PCNA family.</text>
</comment>
<sequence length="249" mass="28097">MPFEIVFEGAKEFAQLIETASRLIDEAAFKVTEEGISMRAMDPSRVVLIDLNLPSSIFSKYEVDGEETIGVNMDHLKKVLKRGKAKDTLILRKGEENFLEISLQGTATRTFRLPLIDVEEIEVELPDLPYTAKVVVLGEVLKEAVKDASLVSDSIKFMAKENEFIMRAEGETQEVEVKLTLEDEGLLDIEVQEETKSAYGVSYLADMVKGIGKADEVTMRFGNEMPMQMEYYIRDEGRLTFLLAPRVEE</sequence>
<name>PCNA_PYRHO</name>
<reference key="1">
    <citation type="journal article" date="1998" name="DNA Res.">
        <title>Complete sequence and gene organization of the genome of a hyper-thermophilic archaebacterium, Pyrococcus horikoshii OT3.</title>
        <authorList>
            <person name="Kawarabayasi Y."/>
            <person name="Sawada M."/>
            <person name="Horikawa H."/>
            <person name="Haikawa Y."/>
            <person name="Hino Y."/>
            <person name="Yamamoto S."/>
            <person name="Sekine M."/>
            <person name="Baba S."/>
            <person name="Kosugi H."/>
            <person name="Hosoyama A."/>
            <person name="Nagai Y."/>
            <person name="Sakai M."/>
            <person name="Ogura K."/>
            <person name="Otsuka R."/>
            <person name="Nakazawa H."/>
            <person name="Takamiya M."/>
            <person name="Ohfuku Y."/>
            <person name="Funahashi T."/>
            <person name="Tanaka T."/>
            <person name="Kudoh Y."/>
            <person name="Yamazaki J."/>
            <person name="Kushida N."/>
            <person name="Oguchi A."/>
            <person name="Aoki K."/>
            <person name="Yoshizawa T."/>
            <person name="Nakamura Y."/>
            <person name="Robb F.T."/>
            <person name="Horikoshi K."/>
            <person name="Masuchi Y."/>
            <person name="Shizuya H."/>
            <person name="Kikuchi H."/>
        </authorList>
    </citation>
    <scope>NUCLEOTIDE SEQUENCE [LARGE SCALE GENOMIC DNA]</scope>
    <source>
        <strain>ATCC 700860 / DSM 12428 / JCM 9974 / NBRC 100139 / OT-3</strain>
    </source>
</reference>
<organism>
    <name type="scientific">Pyrococcus horikoshii (strain ATCC 700860 / DSM 12428 / JCM 9974 / NBRC 100139 / OT-3)</name>
    <dbReference type="NCBI Taxonomy" id="70601"/>
    <lineage>
        <taxon>Archaea</taxon>
        <taxon>Methanobacteriati</taxon>
        <taxon>Methanobacteriota</taxon>
        <taxon>Thermococci</taxon>
        <taxon>Thermococcales</taxon>
        <taxon>Thermococcaceae</taxon>
        <taxon>Pyrococcus</taxon>
    </lineage>
</organism>
<protein>
    <recommendedName>
        <fullName evidence="1">DNA polymerase sliding clamp</fullName>
    </recommendedName>
    <alternativeName>
        <fullName evidence="1">Proliferating cell nuclear antigen homolog</fullName>
        <shortName evidence="1">PCNA</shortName>
    </alternativeName>
</protein>
<accession>O58398</accession>
<proteinExistence type="inferred from homology"/>
<feature type="chain" id="PRO_0000149207" description="DNA polymerase sliding clamp">
    <location>
        <begin position="1"/>
        <end position="249"/>
    </location>
</feature>
<dbReference type="EMBL" id="BA000001">
    <property type="protein sequence ID" value="BAA29756.1"/>
    <property type="molecule type" value="Genomic_DNA"/>
</dbReference>
<dbReference type="PIR" id="B71112">
    <property type="entry name" value="B71112"/>
</dbReference>
<dbReference type="RefSeq" id="WP_010884759.1">
    <property type="nucleotide sequence ID" value="NC_000961.1"/>
</dbReference>
<dbReference type="SMR" id="O58398"/>
<dbReference type="STRING" id="70601.gene:9377609"/>
<dbReference type="EnsemblBacteria" id="BAA29756">
    <property type="protein sequence ID" value="BAA29756"/>
    <property type="gene ID" value="BAA29756"/>
</dbReference>
<dbReference type="GeneID" id="1442994"/>
<dbReference type="KEGG" id="pho:PH0665"/>
<dbReference type="eggNOG" id="arCOG00488">
    <property type="taxonomic scope" value="Archaea"/>
</dbReference>
<dbReference type="OrthoDB" id="14749at2157"/>
<dbReference type="Proteomes" id="UP000000752">
    <property type="component" value="Chromosome"/>
</dbReference>
<dbReference type="GO" id="GO:0003677">
    <property type="term" value="F:DNA binding"/>
    <property type="evidence" value="ECO:0007669"/>
    <property type="project" value="UniProtKB-UniRule"/>
</dbReference>
<dbReference type="GO" id="GO:0030337">
    <property type="term" value="F:DNA polymerase processivity factor activity"/>
    <property type="evidence" value="ECO:0007669"/>
    <property type="project" value="UniProtKB-UniRule"/>
</dbReference>
<dbReference type="GO" id="GO:0006272">
    <property type="term" value="P:leading strand elongation"/>
    <property type="evidence" value="ECO:0007669"/>
    <property type="project" value="TreeGrafter"/>
</dbReference>
<dbReference type="GO" id="GO:0006275">
    <property type="term" value="P:regulation of DNA replication"/>
    <property type="evidence" value="ECO:0007669"/>
    <property type="project" value="UniProtKB-UniRule"/>
</dbReference>
<dbReference type="CDD" id="cd00577">
    <property type="entry name" value="PCNA"/>
    <property type="match status" value="1"/>
</dbReference>
<dbReference type="FunFam" id="3.70.10.10:FF:000038">
    <property type="entry name" value="DNA polymerase sliding clamp 1"/>
    <property type="match status" value="1"/>
</dbReference>
<dbReference type="Gene3D" id="3.70.10.10">
    <property type="match status" value="1"/>
</dbReference>
<dbReference type="HAMAP" id="MF_00317">
    <property type="entry name" value="DNApol_clamp_arch"/>
    <property type="match status" value="1"/>
</dbReference>
<dbReference type="InterPro" id="IPR046938">
    <property type="entry name" value="DNA_clamp_sf"/>
</dbReference>
<dbReference type="InterPro" id="IPR000730">
    <property type="entry name" value="Pr_cel_nuc_antig"/>
</dbReference>
<dbReference type="InterPro" id="IPR022649">
    <property type="entry name" value="Pr_cel_nuc_antig_C"/>
</dbReference>
<dbReference type="InterPro" id="IPR022659">
    <property type="entry name" value="Pr_cel_nuc_antig_CS"/>
</dbReference>
<dbReference type="InterPro" id="IPR022648">
    <property type="entry name" value="Pr_cel_nuc_antig_N"/>
</dbReference>
<dbReference type="NCBIfam" id="TIGR00590">
    <property type="entry name" value="pcna"/>
    <property type="match status" value="1"/>
</dbReference>
<dbReference type="NCBIfam" id="NF002219">
    <property type="entry name" value="PRK01115.1-2"/>
    <property type="match status" value="1"/>
</dbReference>
<dbReference type="NCBIfam" id="NF002221">
    <property type="entry name" value="PRK01115.1-4"/>
    <property type="match status" value="1"/>
</dbReference>
<dbReference type="PANTHER" id="PTHR11352">
    <property type="entry name" value="PROLIFERATING CELL NUCLEAR ANTIGEN"/>
    <property type="match status" value="1"/>
</dbReference>
<dbReference type="PANTHER" id="PTHR11352:SF0">
    <property type="entry name" value="PROLIFERATING CELL NUCLEAR ANTIGEN"/>
    <property type="match status" value="1"/>
</dbReference>
<dbReference type="Pfam" id="PF02747">
    <property type="entry name" value="PCNA_C"/>
    <property type="match status" value="1"/>
</dbReference>
<dbReference type="Pfam" id="PF00705">
    <property type="entry name" value="PCNA_N"/>
    <property type="match status" value="1"/>
</dbReference>
<dbReference type="PRINTS" id="PR00339">
    <property type="entry name" value="PCNACYCLIN"/>
</dbReference>
<dbReference type="SUPFAM" id="SSF55979">
    <property type="entry name" value="DNA clamp"/>
    <property type="match status" value="2"/>
</dbReference>
<dbReference type="PROSITE" id="PS01251">
    <property type="entry name" value="PCNA_1"/>
    <property type="match status" value="1"/>
</dbReference>